<feature type="chain" id="PRO_0000083985" description="Huntingtin-interacting protein 1-related protein">
    <location>
        <begin position="1"/>
        <end position="1068"/>
    </location>
</feature>
<feature type="domain" description="ENTH" evidence="4">
    <location>
        <begin position="23"/>
        <end position="151"/>
    </location>
</feature>
<feature type="domain" description="I/LWEQ" evidence="5">
    <location>
        <begin position="771"/>
        <end position="1012"/>
    </location>
</feature>
<feature type="region of interest" description="Disordered" evidence="6">
    <location>
        <begin position="582"/>
        <end position="610"/>
    </location>
</feature>
<feature type="region of interest" description="Important for actin binding" evidence="1">
    <location>
        <begin position="867"/>
        <end position="924"/>
    </location>
</feature>
<feature type="region of interest" description="Disordered" evidence="6">
    <location>
        <begin position="1011"/>
        <end position="1068"/>
    </location>
</feature>
<feature type="coiled-coil region" evidence="3">
    <location>
        <begin position="346"/>
        <end position="644"/>
    </location>
</feature>
<feature type="compositionally biased region" description="Basic and acidic residues" evidence="6">
    <location>
        <begin position="592"/>
        <end position="608"/>
    </location>
</feature>
<feature type="modified residue" description="N-acetylmethionine" evidence="2">
    <location>
        <position position="1"/>
    </location>
</feature>
<feature type="sequence conflict" description="In Ref. 1; AAF34662." evidence="9" ref="1">
    <original>P</original>
    <variation>R</variation>
    <location>
        <position position="746"/>
    </location>
</feature>
<comment type="function">
    <text>Component of clathrin-coated pits and vesicles, that may link the endocytic machinery to the actin cytoskeleton. Binds 3-phosphoinositides (via ENTH domain). May act through the ENTH domain to promote cell survival by stabilizing receptor tyrosine kinases following ligand-induced endocytosis.</text>
</comment>
<comment type="subunit">
    <text evidence="2 8">Homodimer (PubMed:18790740). Interacts with actin; homodimerization promotes actin binding (PubMed:18790740). Interacts with CLTB (By similarity). Interacts with HIP1 (By similarity). Interacts (via ENTH and I/LWEQ domains) with BCL2L10 (By similarity).</text>
</comment>
<comment type="interaction">
    <interactant intactId="EBI-642457">
        <id>Q9JKY5</id>
    </interactant>
    <interactant intactId="EBI-397955">
        <id>Q60598</id>
        <label>Cttn</label>
    </interactant>
    <organismsDiffer>false</organismsDiffer>
    <experiments>4</experiments>
</comment>
<comment type="interaction">
    <interactant intactId="EBI-642457">
        <id>Q9JKY5</id>
    </interactant>
    <interactant intactId="EBI-27088566">
        <id>G3V6K6</id>
        <label>Egfr</label>
    </interactant>
    <organismsDiffer>true</organismsDiffer>
    <experiments>2</experiments>
</comment>
<comment type="interaction">
    <interactant intactId="EBI-642457">
        <id>Q9JKY5</id>
    </interactant>
    <interactant intactId="EBI-346595">
        <id>Q96B97</id>
        <label>SH3KBP1</label>
    </interactant>
    <organismsDiffer>true</organismsDiffer>
    <experiments>3</experiments>
</comment>
<comment type="subcellular location">
    <subcellularLocation>
        <location>Cytoplasm</location>
        <location>Perinuclear region</location>
    </subcellularLocation>
    <subcellularLocation>
        <location>Endomembrane system</location>
    </subcellularLocation>
    <subcellularLocation>
        <location>Cytoplasmic vesicle</location>
        <location>Clathrin-coated vesicle membrane</location>
    </subcellularLocation>
    <text>Membrane-associated protein, mainly localized at the endocytic compartments and in the perinuclear region.</text>
</comment>
<comment type="tissue specificity">
    <text>Widely expressed. Expressed at lower levels in skeletal muscle and heart. The level of expression does not change appreciably during development.</text>
</comment>
<comment type="domain">
    <text>Binds F-actin via the talin-like I/LWEQ domain.</text>
</comment>
<comment type="disruption phenotype">
    <text evidence="7">Hip1 and Hip1r double knockout mice are dwarfed, afflicted with severe vertebral defects and die in early adulthood.</text>
</comment>
<comment type="similarity">
    <text evidence="9">Belongs to the SLA2 family.</text>
</comment>
<name>HIP1R_MOUSE</name>
<organism>
    <name type="scientific">Mus musculus</name>
    <name type="common">Mouse</name>
    <dbReference type="NCBI Taxonomy" id="10090"/>
    <lineage>
        <taxon>Eukaryota</taxon>
        <taxon>Metazoa</taxon>
        <taxon>Chordata</taxon>
        <taxon>Craniata</taxon>
        <taxon>Vertebrata</taxon>
        <taxon>Euteleostomi</taxon>
        <taxon>Mammalia</taxon>
        <taxon>Eutheria</taxon>
        <taxon>Euarchontoglires</taxon>
        <taxon>Glires</taxon>
        <taxon>Rodentia</taxon>
        <taxon>Myomorpha</taxon>
        <taxon>Muroidea</taxon>
        <taxon>Muridae</taxon>
        <taxon>Murinae</taxon>
        <taxon>Mus</taxon>
        <taxon>Mus</taxon>
    </lineage>
</organism>
<reference key="1">
    <citation type="journal article" date="1999" name="J. Cell Biol.">
        <title>An actin-binding protein of the Sla2/Huntingtin interacting protein 1 family is a novel component of clathrin-coated pits and vesicles.</title>
        <authorList>
            <person name="Engqvist-Goldstein A.E.Y."/>
            <person name="Kessels M.M."/>
            <person name="Chopra V.S."/>
            <person name="Hayden M.R."/>
            <person name="Drubin D.G."/>
        </authorList>
    </citation>
    <scope>NUCLEOTIDE SEQUENCE [MRNA]</scope>
    <source>
        <tissue>Brain</tissue>
    </source>
</reference>
<reference key="2">
    <citation type="journal article" date="2005" name="Science">
        <title>The transcriptional landscape of the mammalian genome.</title>
        <authorList>
            <person name="Carninci P."/>
            <person name="Kasukawa T."/>
            <person name="Katayama S."/>
            <person name="Gough J."/>
            <person name="Frith M.C."/>
            <person name="Maeda N."/>
            <person name="Oyama R."/>
            <person name="Ravasi T."/>
            <person name="Lenhard B."/>
            <person name="Wells C."/>
            <person name="Kodzius R."/>
            <person name="Shimokawa K."/>
            <person name="Bajic V.B."/>
            <person name="Brenner S.E."/>
            <person name="Batalov S."/>
            <person name="Forrest A.R."/>
            <person name="Zavolan M."/>
            <person name="Davis M.J."/>
            <person name="Wilming L.G."/>
            <person name="Aidinis V."/>
            <person name="Allen J.E."/>
            <person name="Ambesi-Impiombato A."/>
            <person name="Apweiler R."/>
            <person name="Aturaliya R.N."/>
            <person name="Bailey T.L."/>
            <person name="Bansal M."/>
            <person name="Baxter L."/>
            <person name="Beisel K.W."/>
            <person name="Bersano T."/>
            <person name="Bono H."/>
            <person name="Chalk A.M."/>
            <person name="Chiu K.P."/>
            <person name="Choudhary V."/>
            <person name="Christoffels A."/>
            <person name="Clutterbuck D.R."/>
            <person name="Crowe M.L."/>
            <person name="Dalla E."/>
            <person name="Dalrymple B.P."/>
            <person name="de Bono B."/>
            <person name="Della Gatta G."/>
            <person name="di Bernardo D."/>
            <person name="Down T."/>
            <person name="Engstrom P."/>
            <person name="Fagiolini M."/>
            <person name="Faulkner G."/>
            <person name="Fletcher C.F."/>
            <person name="Fukushima T."/>
            <person name="Furuno M."/>
            <person name="Futaki S."/>
            <person name="Gariboldi M."/>
            <person name="Georgii-Hemming P."/>
            <person name="Gingeras T.R."/>
            <person name="Gojobori T."/>
            <person name="Green R.E."/>
            <person name="Gustincich S."/>
            <person name="Harbers M."/>
            <person name="Hayashi Y."/>
            <person name="Hensch T.K."/>
            <person name="Hirokawa N."/>
            <person name="Hill D."/>
            <person name="Huminiecki L."/>
            <person name="Iacono M."/>
            <person name="Ikeo K."/>
            <person name="Iwama A."/>
            <person name="Ishikawa T."/>
            <person name="Jakt M."/>
            <person name="Kanapin A."/>
            <person name="Katoh M."/>
            <person name="Kawasawa Y."/>
            <person name="Kelso J."/>
            <person name="Kitamura H."/>
            <person name="Kitano H."/>
            <person name="Kollias G."/>
            <person name="Krishnan S.P."/>
            <person name="Kruger A."/>
            <person name="Kummerfeld S.K."/>
            <person name="Kurochkin I.V."/>
            <person name="Lareau L.F."/>
            <person name="Lazarevic D."/>
            <person name="Lipovich L."/>
            <person name="Liu J."/>
            <person name="Liuni S."/>
            <person name="McWilliam S."/>
            <person name="Madan Babu M."/>
            <person name="Madera M."/>
            <person name="Marchionni L."/>
            <person name="Matsuda H."/>
            <person name="Matsuzawa S."/>
            <person name="Miki H."/>
            <person name="Mignone F."/>
            <person name="Miyake S."/>
            <person name="Morris K."/>
            <person name="Mottagui-Tabar S."/>
            <person name="Mulder N."/>
            <person name="Nakano N."/>
            <person name="Nakauchi H."/>
            <person name="Ng P."/>
            <person name="Nilsson R."/>
            <person name="Nishiguchi S."/>
            <person name="Nishikawa S."/>
            <person name="Nori F."/>
            <person name="Ohara O."/>
            <person name="Okazaki Y."/>
            <person name="Orlando V."/>
            <person name="Pang K.C."/>
            <person name="Pavan W.J."/>
            <person name="Pavesi G."/>
            <person name="Pesole G."/>
            <person name="Petrovsky N."/>
            <person name="Piazza S."/>
            <person name="Reed J."/>
            <person name="Reid J.F."/>
            <person name="Ring B.Z."/>
            <person name="Ringwald M."/>
            <person name="Rost B."/>
            <person name="Ruan Y."/>
            <person name="Salzberg S.L."/>
            <person name="Sandelin A."/>
            <person name="Schneider C."/>
            <person name="Schoenbach C."/>
            <person name="Sekiguchi K."/>
            <person name="Semple C.A."/>
            <person name="Seno S."/>
            <person name="Sessa L."/>
            <person name="Sheng Y."/>
            <person name="Shibata Y."/>
            <person name="Shimada H."/>
            <person name="Shimada K."/>
            <person name="Silva D."/>
            <person name="Sinclair B."/>
            <person name="Sperling S."/>
            <person name="Stupka E."/>
            <person name="Sugiura K."/>
            <person name="Sultana R."/>
            <person name="Takenaka Y."/>
            <person name="Taki K."/>
            <person name="Tammoja K."/>
            <person name="Tan S.L."/>
            <person name="Tang S."/>
            <person name="Taylor M.S."/>
            <person name="Tegner J."/>
            <person name="Teichmann S.A."/>
            <person name="Ueda H.R."/>
            <person name="van Nimwegen E."/>
            <person name="Verardo R."/>
            <person name="Wei C.L."/>
            <person name="Yagi K."/>
            <person name="Yamanishi H."/>
            <person name="Zabarovsky E."/>
            <person name="Zhu S."/>
            <person name="Zimmer A."/>
            <person name="Hide W."/>
            <person name="Bult C."/>
            <person name="Grimmond S.M."/>
            <person name="Teasdale R.D."/>
            <person name="Liu E.T."/>
            <person name="Brusic V."/>
            <person name="Quackenbush J."/>
            <person name="Wahlestedt C."/>
            <person name="Mattick J.S."/>
            <person name="Hume D.A."/>
            <person name="Kai C."/>
            <person name="Sasaki D."/>
            <person name="Tomaru Y."/>
            <person name="Fukuda S."/>
            <person name="Kanamori-Katayama M."/>
            <person name="Suzuki M."/>
            <person name="Aoki J."/>
            <person name="Arakawa T."/>
            <person name="Iida J."/>
            <person name="Imamura K."/>
            <person name="Itoh M."/>
            <person name="Kato T."/>
            <person name="Kawaji H."/>
            <person name="Kawagashira N."/>
            <person name="Kawashima T."/>
            <person name="Kojima M."/>
            <person name="Kondo S."/>
            <person name="Konno H."/>
            <person name="Nakano K."/>
            <person name="Ninomiya N."/>
            <person name="Nishio T."/>
            <person name="Okada M."/>
            <person name="Plessy C."/>
            <person name="Shibata K."/>
            <person name="Shiraki T."/>
            <person name="Suzuki S."/>
            <person name="Tagami M."/>
            <person name="Waki K."/>
            <person name="Watahiki A."/>
            <person name="Okamura-Oho Y."/>
            <person name="Suzuki H."/>
            <person name="Kawai J."/>
            <person name="Hayashizaki Y."/>
        </authorList>
    </citation>
    <scope>NUCLEOTIDE SEQUENCE [LARGE SCALE MRNA]</scope>
    <source>
        <strain>C57BL/6J</strain>
        <tissue>Liver</tissue>
    </source>
</reference>
<reference key="3">
    <citation type="journal article" date="2007" name="Hum. Mol. Genet.">
        <title>Degenerative phenotypes caused by the combined deficiency of murine HIP1 and HIP1r are rescued by human HIP1.</title>
        <authorList>
            <person name="Bradley S.V."/>
            <person name="Hyun T.S."/>
            <person name="Oravecz-Wilson K.I."/>
            <person name="Li L."/>
            <person name="Waldorff E.I."/>
            <person name="Ermilov A.N."/>
            <person name="Goldstein S.A."/>
            <person name="Zhang C.X."/>
            <person name="Drubin D.G."/>
            <person name="Varela K."/>
            <person name="Parlow A."/>
            <person name="Dlugosz A.A."/>
            <person name="Ross T.S."/>
        </authorList>
    </citation>
    <scope>DISRUPTION PHENOTYPE</scope>
</reference>
<reference key="4">
    <citation type="journal article" date="2008" name="J. Biol. Chem.">
        <title>Actin binding by Hip1 (huntingtin-interacting protein 1) and Hip1R (Hip1-related protein) is regulated by clathrin light chain.</title>
        <authorList>
            <person name="Wilbur J.D."/>
            <person name="Chen C.-Y."/>
            <person name="Manalo V."/>
            <person name="Hwang P.K."/>
            <person name="Fletterick R.J."/>
            <person name="Brodsky F.M."/>
        </authorList>
    </citation>
    <scope>SUBUNIT</scope>
    <scope>INTERACTION WITH F-ACTIN</scope>
</reference>
<reference key="5">
    <citation type="journal article" date="2010" name="Cell">
        <title>A tissue-specific atlas of mouse protein phosphorylation and expression.</title>
        <authorList>
            <person name="Huttlin E.L."/>
            <person name="Jedrychowski M.P."/>
            <person name="Elias J.E."/>
            <person name="Goswami T."/>
            <person name="Rad R."/>
            <person name="Beausoleil S.A."/>
            <person name="Villen J."/>
            <person name="Haas W."/>
            <person name="Sowa M.E."/>
            <person name="Gygi S.P."/>
        </authorList>
    </citation>
    <scope>IDENTIFICATION BY MASS SPECTROMETRY [LARGE SCALE ANALYSIS]</scope>
    <source>
        <tissue>Brain</tissue>
        <tissue>Brown adipose tissue</tissue>
        <tissue>Heart</tissue>
        <tissue>Kidney</tissue>
        <tissue>Liver</tissue>
        <tissue>Lung</tissue>
        <tissue>Pancreas</tissue>
        <tissue>Spleen</tissue>
        <tissue>Testis</tissue>
    </source>
</reference>
<sequence>MNSIKNVPARVLSRRPGHSLEAEREQFDKTQAISISKAINSQEAPVKEKHARRIILGTHHEKGAFTFWSYAIGLPLSSSSILSWKFCHVLHKVLRDGHPNVLHDYQRYRSNIREIGDLWGHLRDQYGHLVNIYTKLLLTKISFHLKHPQFPAGLEVTDEVLEKAAGTDVNNIFQLTVEMFDYMDCELKLSESVFRQLNTAIAVSQMSSGQCRLAPLIQVIQDCSHLYHYTVKLMFKLHSCLPADTLQGHRDRFHEQFHSLKNFFRRASDMLYFKRLIQIPRLPEGPPNFLRASALAEHIKPVVVIPEEAPEEEEPENLIEISSAPPAGEPVVVADLFDQTFGPPNGSMKDDRDLQIENLKREVETLRAELEKIKMEAQRYISQLKGQVNGLEAELEEQRKQKQKALVDNEQLRHELAQLKALQLEGARNQGLREEAERKASATEARYSKLKEKHSELINTHAELLRKNADTAKQLTVTQQSQEEVARVKEQLAFQMEQAKRESEMKMEEQSDQLEKLKRELAARAGELARAQEALSRTEQSGSELSSRLDTLNAEKEALSGVVRQREAELLAAQSLVREKEEALSQEQQRSSQEKGELRGQLAEKESQEQGLRQKLLDEQLAVLRSAAAEAEAILQDAVSKLDDPLHLRCTSSPDYLVSRAQAALDSVSGLEQGHTQYLASSEDASALVAALTRFSHLAADTIVNGAATSHLAPTDPADRLMDTCRECGARALELVGQLQDQTVLPRAQPSLMRAPLQGILQLGQDLKPKSLDVRQEELGAMVDKEMAATSAAIEDAVRRIEDMMSQARHESSGVKLEVNERILNSCTDLMKAIRLLVMTSTSLQKEIVESGRGAATQQEFYAKNSRWTEGLISASKAVGWGATQLVESADKVVLHMGKYEELIVCSHEIAASTAQLVAASKVKANKNSPHLSRLQECSRTVNERAANVVASTKSGQEQIEDRDTMDFSGLSLIKLKKQEMETQVRVLELEKTLEAERVRLGELRKQHYVLAGGMGTPSEEEPSRPSPAPRSGATKKPPLAQKPSIAPRTDNQLDKKDGVYPAQLVNY</sequence>
<dbReference type="EMBL" id="AF221713">
    <property type="protein sequence ID" value="AAF34662.1"/>
    <property type="molecule type" value="mRNA"/>
</dbReference>
<dbReference type="EMBL" id="AK146663">
    <property type="protein sequence ID" value="BAE27341.1"/>
    <property type="molecule type" value="mRNA"/>
</dbReference>
<dbReference type="CCDS" id="CCDS39276.1"/>
<dbReference type="RefSeq" id="NP_659507.3">
    <property type="nucleotide sequence ID" value="NM_145070.3"/>
</dbReference>
<dbReference type="SMR" id="Q9JKY5"/>
<dbReference type="BioGRID" id="205896">
    <property type="interactions" value="29"/>
</dbReference>
<dbReference type="FunCoup" id="Q9JKY5">
    <property type="interactions" value="822"/>
</dbReference>
<dbReference type="IntAct" id="Q9JKY5">
    <property type="interactions" value="7"/>
</dbReference>
<dbReference type="MINT" id="Q9JKY5"/>
<dbReference type="STRING" id="10090.ENSMUSP00000000939"/>
<dbReference type="iPTMnet" id="Q9JKY5"/>
<dbReference type="PhosphoSitePlus" id="Q9JKY5"/>
<dbReference type="jPOST" id="Q9JKY5"/>
<dbReference type="PaxDb" id="10090-ENSMUSP00000000939"/>
<dbReference type="ProteomicsDB" id="269597"/>
<dbReference type="Pumba" id="Q9JKY5"/>
<dbReference type="Antibodypedia" id="31710">
    <property type="antibodies" value="298 antibodies from 33 providers"/>
</dbReference>
<dbReference type="DNASU" id="29816"/>
<dbReference type="Ensembl" id="ENSMUST00000000939.15">
    <property type="protein sequence ID" value="ENSMUSP00000000939.9"/>
    <property type="gene ID" value="ENSMUSG00000000915.16"/>
</dbReference>
<dbReference type="GeneID" id="29816"/>
<dbReference type="KEGG" id="mmu:29816"/>
<dbReference type="UCSC" id="uc008zos.2">
    <property type="organism name" value="mouse"/>
</dbReference>
<dbReference type="AGR" id="MGI:1352504"/>
<dbReference type="CTD" id="9026"/>
<dbReference type="MGI" id="MGI:1352504">
    <property type="gene designation" value="Hip1r"/>
</dbReference>
<dbReference type="VEuPathDB" id="HostDB:ENSMUSG00000000915"/>
<dbReference type="eggNOG" id="KOG0980">
    <property type="taxonomic scope" value="Eukaryota"/>
</dbReference>
<dbReference type="GeneTree" id="ENSGT00940000153594"/>
<dbReference type="HOGENOM" id="CLU_006034_0_0_1"/>
<dbReference type="InParanoid" id="Q9JKY5"/>
<dbReference type="OMA" id="FQMSVEM"/>
<dbReference type="OrthoDB" id="8178130at2759"/>
<dbReference type="PhylomeDB" id="Q9JKY5"/>
<dbReference type="TreeFam" id="TF316860"/>
<dbReference type="Reactome" id="R-MMU-432722">
    <property type="pathway name" value="Golgi Associated Vesicle Biogenesis"/>
</dbReference>
<dbReference type="Reactome" id="R-MMU-8856828">
    <property type="pathway name" value="Clathrin-mediated endocytosis"/>
</dbReference>
<dbReference type="BioGRID-ORCS" id="29816">
    <property type="hits" value="3 hits in 78 CRISPR screens"/>
</dbReference>
<dbReference type="CD-CODE" id="CE726F99">
    <property type="entry name" value="Postsynaptic density"/>
</dbReference>
<dbReference type="ChiTaRS" id="Hip1r">
    <property type="organism name" value="mouse"/>
</dbReference>
<dbReference type="PRO" id="PR:Q9JKY5"/>
<dbReference type="Proteomes" id="UP000000589">
    <property type="component" value="Chromosome 5"/>
</dbReference>
<dbReference type="RNAct" id="Q9JKY5">
    <property type="molecule type" value="protein"/>
</dbReference>
<dbReference type="Bgee" id="ENSMUSG00000000915">
    <property type="expression patterns" value="Expressed in urinary bladder urothelium and 335 other cell types or tissues"/>
</dbReference>
<dbReference type="ExpressionAtlas" id="Q9JKY5">
    <property type="expression patterns" value="baseline and differential"/>
</dbReference>
<dbReference type="GO" id="GO:0016324">
    <property type="term" value="C:apical plasma membrane"/>
    <property type="evidence" value="ECO:0000314"/>
    <property type="project" value="ParkinsonsUK-UCL"/>
</dbReference>
<dbReference type="GO" id="GO:0005938">
    <property type="term" value="C:cell cortex"/>
    <property type="evidence" value="ECO:0000314"/>
    <property type="project" value="ParkinsonsUK-UCL"/>
</dbReference>
<dbReference type="GO" id="GO:0005905">
    <property type="term" value="C:clathrin-coated pit"/>
    <property type="evidence" value="ECO:0000314"/>
    <property type="project" value="ParkinsonsUK-UCL"/>
</dbReference>
<dbReference type="GO" id="GO:0030136">
    <property type="term" value="C:clathrin-coated vesicle"/>
    <property type="evidence" value="ECO:0000314"/>
    <property type="project" value="ParkinsonsUK-UCL"/>
</dbReference>
<dbReference type="GO" id="GO:0030665">
    <property type="term" value="C:clathrin-coated vesicle membrane"/>
    <property type="evidence" value="ECO:0007669"/>
    <property type="project" value="UniProtKB-SubCell"/>
</dbReference>
<dbReference type="GO" id="GO:0005856">
    <property type="term" value="C:cytoskeleton"/>
    <property type="evidence" value="ECO:0000314"/>
    <property type="project" value="MGI"/>
</dbReference>
<dbReference type="GO" id="GO:0005829">
    <property type="term" value="C:cytosol"/>
    <property type="evidence" value="ECO:0007669"/>
    <property type="project" value="Ensembl"/>
</dbReference>
<dbReference type="GO" id="GO:0032839">
    <property type="term" value="C:dendrite cytoplasm"/>
    <property type="evidence" value="ECO:0000250"/>
    <property type="project" value="ParkinsonsUK-UCL"/>
</dbReference>
<dbReference type="GO" id="GO:0043197">
    <property type="term" value="C:dendritic spine"/>
    <property type="evidence" value="ECO:0000250"/>
    <property type="project" value="ParkinsonsUK-UCL"/>
</dbReference>
<dbReference type="GO" id="GO:0098978">
    <property type="term" value="C:glutamatergic synapse"/>
    <property type="evidence" value="ECO:0007669"/>
    <property type="project" value="Ensembl"/>
</dbReference>
<dbReference type="GO" id="GO:0005739">
    <property type="term" value="C:mitochondrion"/>
    <property type="evidence" value="ECO:0007669"/>
    <property type="project" value="GOC"/>
</dbReference>
<dbReference type="GO" id="GO:0043025">
    <property type="term" value="C:neuronal cell body"/>
    <property type="evidence" value="ECO:0000250"/>
    <property type="project" value="ParkinsonsUK-UCL"/>
</dbReference>
<dbReference type="GO" id="GO:0048471">
    <property type="term" value="C:perinuclear region of cytoplasm"/>
    <property type="evidence" value="ECO:0000314"/>
    <property type="project" value="ParkinsonsUK-UCL"/>
</dbReference>
<dbReference type="GO" id="GO:0014069">
    <property type="term" value="C:postsynaptic density"/>
    <property type="evidence" value="ECO:0000250"/>
    <property type="project" value="ParkinsonsUK-UCL"/>
</dbReference>
<dbReference type="GO" id="GO:0098843">
    <property type="term" value="C:postsynaptic endocytic zone"/>
    <property type="evidence" value="ECO:0007669"/>
    <property type="project" value="Ensembl"/>
</dbReference>
<dbReference type="GO" id="GO:0032587">
    <property type="term" value="C:ruffle membrane"/>
    <property type="evidence" value="ECO:0007669"/>
    <property type="project" value="Ensembl"/>
</dbReference>
<dbReference type="GO" id="GO:0097060">
    <property type="term" value="C:synaptic membrane"/>
    <property type="evidence" value="ECO:0000250"/>
    <property type="project" value="ParkinsonsUK-UCL"/>
</dbReference>
<dbReference type="GO" id="GO:0003779">
    <property type="term" value="F:actin binding"/>
    <property type="evidence" value="ECO:0000314"/>
    <property type="project" value="MGI"/>
</dbReference>
<dbReference type="GO" id="GO:0051015">
    <property type="term" value="F:actin filament binding"/>
    <property type="evidence" value="ECO:0000314"/>
    <property type="project" value="ParkinsonsUK-UCL"/>
</dbReference>
<dbReference type="GO" id="GO:0035615">
    <property type="term" value="F:clathrin adaptor activity"/>
    <property type="evidence" value="ECO:0000314"/>
    <property type="project" value="ParkinsonsUK-UCL"/>
</dbReference>
<dbReference type="GO" id="GO:0030276">
    <property type="term" value="F:clathrin binding"/>
    <property type="evidence" value="ECO:0000314"/>
    <property type="project" value="ParkinsonsUK-UCL"/>
</dbReference>
<dbReference type="GO" id="GO:0032051">
    <property type="term" value="F:clathrin light chain binding"/>
    <property type="evidence" value="ECO:0000353"/>
    <property type="project" value="ParkinsonsUK-UCL"/>
</dbReference>
<dbReference type="GO" id="GO:0035091">
    <property type="term" value="F:phosphatidylinositol binding"/>
    <property type="evidence" value="ECO:0000250"/>
    <property type="project" value="UniProtKB"/>
</dbReference>
<dbReference type="GO" id="GO:0005547">
    <property type="term" value="F:phosphatidylinositol-3,4,5-trisphosphate binding"/>
    <property type="evidence" value="ECO:0007669"/>
    <property type="project" value="Ensembl"/>
</dbReference>
<dbReference type="GO" id="GO:0043325">
    <property type="term" value="F:phosphatidylinositol-3,4-bisphosphate binding"/>
    <property type="evidence" value="ECO:0007669"/>
    <property type="project" value="Ensembl"/>
</dbReference>
<dbReference type="GO" id="GO:0080025">
    <property type="term" value="F:phosphatidylinositol-3,5-bisphosphate binding"/>
    <property type="evidence" value="ECO:0007669"/>
    <property type="project" value="Ensembl"/>
</dbReference>
<dbReference type="GO" id="GO:0005546">
    <property type="term" value="F:phosphatidylinositol-4,5-bisphosphate binding"/>
    <property type="evidence" value="ECO:0007669"/>
    <property type="project" value="Ensembl"/>
</dbReference>
<dbReference type="GO" id="GO:0046982">
    <property type="term" value="F:protein heterodimerization activity"/>
    <property type="evidence" value="ECO:0000353"/>
    <property type="project" value="ParkinsonsUK-UCL"/>
</dbReference>
<dbReference type="GO" id="GO:0042803">
    <property type="term" value="F:protein homodimerization activity"/>
    <property type="evidence" value="ECO:0000353"/>
    <property type="project" value="ParkinsonsUK-UCL"/>
</dbReference>
<dbReference type="GO" id="GO:0017124">
    <property type="term" value="F:SH3 domain binding"/>
    <property type="evidence" value="ECO:0000314"/>
    <property type="project" value="ParkinsonsUK-UCL"/>
</dbReference>
<dbReference type="GO" id="GO:0048268">
    <property type="term" value="P:clathrin coat assembly"/>
    <property type="evidence" value="ECO:0000314"/>
    <property type="project" value="ParkinsonsUK-UCL"/>
</dbReference>
<dbReference type="GO" id="GO:0055123">
    <property type="term" value="P:digestive system development"/>
    <property type="evidence" value="ECO:0000315"/>
    <property type="project" value="ParkinsonsUK-UCL"/>
</dbReference>
<dbReference type="GO" id="GO:0097193">
    <property type="term" value="P:intrinsic apoptotic signaling pathway"/>
    <property type="evidence" value="ECO:0007669"/>
    <property type="project" value="Ensembl"/>
</dbReference>
<dbReference type="GO" id="GO:0061024">
    <property type="term" value="P:membrane organization"/>
    <property type="evidence" value="ECO:0000315"/>
    <property type="project" value="ParkinsonsUK-UCL"/>
</dbReference>
<dbReference type="GO" id="GO:0030837">
    <property type="term" value="P:negative regulation of actin filament polymerization"/>
    <property type="evidence" value="ECO:0000314"/>
    <property type="project" value="ParkinsonsUK-UCL"/>
</dbReference>
<dbReference type="GO" id="GO:0043066">
    <property type="term" value="P:negative regulation of apoptotic process"/>
    <property type="evidence" value="ECO:0000315"/>
    <property type="project" value="ParkinsonsUK-UCL"/>
</dbReference>
<dbReference type="GO" id="GO:0034316">
    <property type="term" value="P:negative regulation of Arp2/3 complex-mediated actin nucleation"/>
    <property type="evidence" value="ECO:0000314"/>
    <property type="project" value="ParkinsonsUK-UCL"/>
</dbReference>
<dbReference type="GO" id="GO:1905445">
    <property type="term" value="P:positive regulation of clathrin coat assembly"/>
    <property type="evidence" value="ECO:0000314"/>
    <property type="project" value="ParkinsonsUK-UCL"/>
</dbReference>
<dbReference type="GO" id="GO:2000370">
    <property type="term" value="P:positive regulation of clathrin-dependent endocytosis"/>
    <property type="evidence" value="ECO:0000305"/>
    <property type="project" value="ParkinsonsUK-UCL"/>
</dbReference>
<dbReference type="GO" id="GO:0045742">
    <property type="term" value="P:positive regulation of epidermal growth factor receptor signaling pathway"/>
    <property type="evidence" value="ECO:0007669"/>
    <property type="project" value="Ensembl"/>
</dbReference>
<dbReference type="GO" id="GO:1901030">
    <property type="term" value="P:positive regulation of mitochondrial outer membrane permeabilization involved in apoptotic signaling pathway"/>
    <property type="evidence" value="ECO:0007669"/>
    <property type="project" value="Ensembl"/>
</dbReference>
<dbReference type="GO" id="GO:2000588">
    <property type="term" value="P:positive regulation of platelet-derived growth factor receptor-beta signaling pathway"/>
    <property type="evidence" value="ECO:0007669"/>
    <property type="project" value="Ensembl"/>
</dbReference>
<dbReference type="GO" id="GO:0099173">
    <property type="term" value="P:postsynapse organization"/>
    <property type="evidence" value="ECO:0007669"/>
    <property type="project" value="Ensembl"/>
</dbReference>
<dbReference type="GO" id="GO:0050821">
    <property type="term" value="P:protein stabilization"/>
    <property type="evidence" value="ECO:0007669"/>
    <property type="project" value="Ensembl"/>
</dbReference>
<dbReference type="GO" id="GO:0006898">
    <property type="term" value="P:receptor-mediated endocytosis"/>
    <property type="evidence" value="ECO:0000314"/>
    <property type="project" value="MGI"/>
</dbReference>
<dbReference type="GO" id="GO:0032956">
    <property type="term" value="P:regulation of actin cytoskeleton organization"/>
    <property type="evidence" value="ECO:0000316"/>
    <property type="project" value="ParkinsonsUK-UCL"/>
</dbReference>
<dbReference type="GO" id="GO:2000369">
    <property type="term" value="P:regulation of clathrin-dependent endocytosis"/>
    <property type="evidence" value="ECO:0000303"/>
    <property type="project" value="ParkinsonsUK-UCL"/>
</dbReference>
<dbReference type="GO" id="GO:0060453">
    <property type="term" value="P:regulation of gastric acid secretion"/>
    <property type="evidence" value="ECO:0000315"/>
    <property type="project" value="ParkinsonsUK-UCL"/>
</dbReference>
<dbReference type="FunFam" id="1.20.1410.10:FF:000002">
    <property type="entry name" value="Huntingtin interacting protein 1"/>
    <property type="match status" value="1"/>
</dbReference>
<dbReference type="FunFam" id="1.20.5.1700:FF:000002">
    <property type="entry name" value="Huntingtin interacting protein 1"/>
    <property type="match status" value="1"/>
</dbReference>
<dbReference type="FunFam" id="1.25.40.90:FF:000012">
    <property type="entry name" value="Huntingtin interacting protein 1-related"/>
    <property type="match status" value="1"/>
</dbReference>
<dbReference type="Gene3D" id="1.20.5.1700">
    <property type="match status" value="1"/>
</dbReference>
<dbReference type="Gene3D" id="1.25.40.90">
    <property type="match status" value="1"/>
</dbReference>
<dbReference type="Gene3D" id="6.10.250.920">
    <property type="match status" value="1"/>
</dbReference>
<dbReference type="Gene3D" id="1.20.1410.10">
    <property type="entry name" value="I/LWEQ domain"/>
    <property type="match status" value="1"/>
</dbReference>
<dbReference type="InterPro" id="IPR011417">
    <property type="entry name" value="ANTH_dom"/>
</dbReference>
<dbReference type="InterPro" id="IPR013809">
    <property type="entry name" value="ENTH"/>
</dbReference>
<dbReference type="InterPro" id="IPR008942">
    <property type="entry name" value="ENTH_VHS"/>
</dbReference>
<dbReference type="InterPro" id="IPR032422">
    <property type="entry name" value="HIP1_clath-bd"/>
</dbReference>
<dbReference type="InterPro" id="IPR035964">
    <property type="entry name" value="I/LWEQ_dom_sf"/>
</dbReference>
<dbReference type="InterPro" id="IPR002558">
    <property type="entry name" value="ILWEQ_dom"/>
</dbReference>
<dbReference type="InterPro" id="IPR030224">
    <property type="entry name" value="Sla2_fam"/>
</dbReference>
<dbReference type="PANTHER" id="PTHR10407">
    <property type="entry name" value="HUNTINGTIN INTERACTING PROTEIN 1"/>
    <property type="match status" value="1"/>
</dbReference>
<dbReference type="PANTHER" id="PTHR10407:SF10">
    <property type="entry name" value="HUNTINGTIN-INTERACTING PROTEIN 1-RELATED PROTEIN"/>
    <property type="match status" value="1"/>
</dbReference>
<dbReference type="Pfam" id="PF07651">
    <property type="entry name" value="ANTH"/>
    <property type="match status" value="1"/>
</dbReference>
<dbReference type="Pfam" id="PF16515">
    <property type="entry name" value="HIP1_clath_bdg"/>
    <property type="match status" value="1"/>
</dbReference>
<dbReference type="Pfam" id="PF01608">
    <property type="entry name" value="I_LWEQ"/>
    <property type="match status" value="1"/>
</dbReference>
<dbReference type="SMART" id="SM00273">
    <property type="entry name" value="ENTH"/>
    <property type="match status" value="1"/>
</dbReference>
<dbReference type="SMART" id="SM00307">
    <property type="entry name" value="ILWEQ"/>
    <property type="match status" value="1"/>
</dbReference>
<dbReference type="SUPFAM" id="SSF48464">
    <property type="entry name" value="ENTH/VHS domain"/>
    <property type="match status" value="1"/>
</dbReference>
<dbReference type="SUPFAM" id="SSF109885">
    <property type="entry name" value="I/LWEQ domain"/>
    <property type="match status" value="1"/>
</dbReference>
<dbReference type="PROSITE" id="PS50942">
    <property type="entry name" value="ENTH"/>
    <property type="match status" value="1"/>
</dbReference>
<dbReference type="PROSITE" id="PS50945">
    <property type="entry name" value="I_LWEQ"/>
    <property type="match status" value="1"/>
</dbReference>
<keyword id="KW-0007">Acetylation</keyword>
<keyword id="KW-0009">Actin-binding</keyword>
<keyword id="KW-0175">Coiled coil</keyword>
<keyword id="KW-0963">Cytoplasm</keyword>
<keyword id="KW-0968">Cytoplasmic vesicle</keyword>
<keyword id="KW-0254">Endocytosis</keyword>
<keyword id="KW-0472">Membrane</keyword>
<keyword id="KW-1185">Reference proteome</keyword>
<proteinExistence type="evidence at protein level"/>
<gene>
    <name type="primary">Hip1r</name>
</gene>
<protein>
    <recommendedName>
        <fullName>Huntingtin-interacting protein 1-related protein</fullName>
        <shortName>HIP1-related protein</shortName>
    </recommendedName>
</protein>
<accession>Q9JKY5</accession>
<accession>Q3UJ14</accession>
<evidence type="ECO:0000250" key="1"/>
<evidence type="ECO:0000250" key="2">
    <source>
        <dbReference type="UniProtKB" id="O75146"/>
    </source>
</evidence>
<evidence type="ECO:0000255" key="3"/>
<evidence type="ECO:0000255" key="4">
    <source>
        <dbReference type="PROSITE-ProRule" id="PRU00243"/>
    </source>
</evidence>
<evidence type="ECO:0000255" key="5">
    <source>
        <dbReference type="PROSITE-ProRule" id="PRU00292"/>
    </source>
</evidence>
<evidence type="ECO:0000256" key="6">
    <source>
        <dbReference type="SAM" id="MobiDB-lite"/>
    </source>
</evidence>
<evidence type="ECO:0000269" key="7">
    <source>
    </source>
</evidence>
<evidence type="ECO:0000269" key="8">
    <source>
    </source>
</evidence>
<evidence type="ECO:0000305" key="9"/>